<sequence length="254" mass="26488">MDRVKLTGVVLRAVDYGESDRVVTLLTAERGKVSAFARGARASRRRFGGALEPFTLLSAEVRERSGSDLLGLDSVSVVRGFGALRGDLGRIACAGYAAELARELVRDHQPHDELFELLVAYLDALDAGPPRPAALRAFELGALRAAGLMPRLDACARCGAPVGEGPVRFDAGEGGALCAGCAPGVPRTLPLAAGTLAALLRLQDGGLAAAASEPLAPPAGREAREALTAFLEHHLGRRLAARRFLDEIGPLLGA</sequence>
<protein>
    <recommendedName>
        <fullName evidence="1">DNA repair protein RecO</fullName>
    </recommendedName>
    <alternativeName>
        <fullName evidence="1">Recombination protein O</fullName>
    </alternativeName>
</protein>
<proteinExistence type="inferred from homology"/>
<organism>
    <name type="scientific">Anaeromyxobacter sp. (strain K)</name>
    <dbReference type="NCBI Taxonomy" id="447217"/>
    <lineage>
        <taxon>Bacteria</taxon>
        <taxon>Pseudomonadati</taxon>
        <taxon>Myxococcota</taxon>
        <taxon>Myxococcia</taxon>
        <taxon>Myxococcales</taxon>
        <taxon>Cystobacterineae</taxon>
        <taxon>Anaeromyxobacteraceae</taxon>
        <taxon>Anaeromyxobacter</taxon>
    </lineage>
</organism>
<feature type="chain" id="PRO_1000099362" description="DNA repair protein RecO">
    <location>
        <begin position="1"/>
        <end position="254"/>
    </location>
</feature>
<accession>B4UG90</accession>
<name>RECO_ANASK</name>
<evidence type="ECO:0000255" key="1">
    <source>
        <dbReference type="HAMAP-Rule" id="MF_00201"/>
    </source>
</evidence>
<reference key="1">
    <citation type="submission" date="2008-08" db="EMBL/GenBank/DDBJ databases">
        <title>Complete sequence of Anaeromyxobacter sp. K.</title>
        <authorList>
            <consortium name="US DOE Joint Genome Institute"/>
            <person name="Lucas S."/>
            <person name="Copeland A."/>
            <person name="Lapidus A."/>
            <person name="Glavina del Rio T."/>
            <person name="Dalin E."/>
            <person name="Tice H."/>
            <person name="Bruce D."/>
            <person name="Goodwin L."/>
            <person name="Pitluck S."/>
            <person name="Saunders E."/>
            <person name="Brettin T."/>
            <person name="Detter J.C."/>
            <person name="Han C."/>
            <person name="Larimer F."/>
            <person name="Land M."/>
            <person name="Hauser L."/>
            <person name="Kyrpides N."/>
            <person name="Ovchinnikiva G."/>
            <person name="Beliaev A."/>
        </authorList>
    </citation>
    <scope>NUCLEOTIDE SEQUENCE [LARGE SCALE GENOMIC DNA]</scope>
    <source>
        <strain>K</strain>
    </source>
</reference>
<comment type="function">
    <text evidence="1">Involved in DNA repair and RecF pathway recombination.</text>
</comment>
<comment type="similarity">
    <text evidence="1">Belongs to the RecO family.</text>
</comment>
<dbReference type="EMBL" id="CP001131">
    <property type="protein sequence ID" value="ACG73782.1"/>
    <property type="molecule type" value="Genomic_DNA"/>
</dbReference>
<dbReference type="RefSeq" id="WP_012526566.1">
    <property type="nucleotide sequence ID" value="NC_011145.1"/>
</dbReference>
<dbReference type="SMR" id="B4UG90"/>
<dbReference type="KEGG" id="ank:AnaeK_2557"/>
<dbReference type="HOGENOM" id="CLU_066632_2_0_7"/>
<dbReference type="OrthoDB" id="9780797at2"/>
<dbReference type="Proteomes" id="UP000001871">
    <property type="component" value="Chromosome"/>
</dbReference>
<dbReference type="GO" id="GO:0043590">
    <property type="term" value="C:bacterial nucleoid"/>
    <property type="evidence" value="ECO:0007669"/>
    <property type="project" value="TreeGrafter"/>
</dbReference>
<dbReference type="GO" id="GO:0006310">
    <property type="term" value="P:DNA recombination"/>
    <property type="evidence" value="ECO:0007669"/>
    <property type="project" value="UniProtKB-UniRule"/>
</dbReference>
<dbReference type="GO" id="GO:0006302">
    <property type="term" value="P:double-strand break repair"/>
    <property type="evidence" value="ECO:0007669"/>
    <property type="project" value="TreeGrafter"/>
</dbReference>
<dbReference type="Gene3D" id="2.40.50.140">
    <property type="entry name" value="Nucleic acid-binding proteins"/>
    <property type="match status" value="1"/>
</dbReference>
<dbReference type="Gene3D" id="1.20.1440.120">
    <property type="entry name" value="Recombination protein O, C-terminal domain"/>
    <property type="match status" value="1"/>
</dbReference>
<dbReference type="HAMAP" id="MF_00201">
    <property type="entry name" value="RecO"/>
    <property type="match status" value="1"/>
</dbReference>
<dbReference type="InterPro" id="IPR037278">
    <property type="entry name" value="ARFGAP/RecO"/>
</dbReference>
<dbReference type="InterPro" id="IPR022572">
    <property type="entry name" value="DNA_rep/recomb_RecO_N"/>
</dbReference>
<dbReference type="InterPro" id="IPR012340">
    <property type="entry name" value="NA-bd_OB-fold"/>
</dbReference>
<dbReference type="InterPro" id="IPR003717">
    <property type="entry name" value="RecO"/>
</dbReference>
<dbReference type="InterPro" id="IPR042242">
    <property type="entry name" value="RecO_C"/>
</dbReference>
<dbReference type="NCBIfam" id="TIGR00613">
    <property type="entry name" value="reco"/>
    <property type="match status" value="1"/>
</dbReference>
<dbReference type="PANTHER" id="PTHR33991">
    <property type="entry name" value="DNA REPAIR PROTEIN RECO"/>
    <property type="match status" value="1"/>
</dbReference>
<dbReference type="PANTHER" id="PTHR33991:SF1">
    <property type="entry name" value="DNA REPAIR PROTEIN RECO"/>
    <property type="match status" value="1"/>
</dbReference>
<dbReference type="Pfam" id="PF02565">
    <property type="entry name" value="RecO_C"/>
    <property type="match status" value="1"/>
</dbReference>
<dbReference type="Pfam" id="PF11967">
    <property type="entry name" value="RecO_N"/>
    <property type="match status" value="1"/>
</dbReference>
<dbReference type="SUPFAM" id="SSF57863">
    <property type="entry name" value="ArfGap/RecO-like zinc finger"/>
    <property type="match status" value="1"/>
</dbReference>
<dbReference type="SUPFAM" id="SSF50249">
    <property type="entry name" value="Nucleic acid-binding proteins"/>
    <property type="match status" value="1"/>
</dbReference>
<gene>
    <name evidence="1" type="primary">recO</name>
    <name type="ordered locus">AnaeK_2557</name>
</gene>
<keyword id="KW-0227">DNA damage</keyword>
<keyword id="KW-0233">DNA recombination</keyword>
<keyword id="KW-0234">DNA repair</keyword>